<gene>
    <name type="primary">Ly6c2</name>
    <name type="synonym">Ly6c</name>
</gene>
<accession>P0CW03</accession>
<accession>P09568</accession>
<accession>Q58E40</accession>
<accession>Q8C2D8</accession>
<proteinExistence type="evidence at protein level"/>
<dbReference type="EMBL" id="M18466">
    <property type="protein sequence ID" value="AAA39466.1"/>
    <property type="molecule type" value="mRNA"/>
</dbReference>
<dbReference type="EMBL" id="BC092082">
    <property type="protein sequence ID" value="AAH92082.1"/>
    <property type="molecule type" value="mRNA"/>
</dbReference>
<dbReference type="CCDS" id="CCDS49638.1"/>
<dbReference type="PIR" id="I56012">
    <property type="entry name" value="I56012"/>
</dbReference>
<dbReference type="RefSeq" id="NP_001092687.1">
    <property type="nucleotide sequence ID" value="NM_001099217.2"/>
</dbReference>
<dbReference type="RefSeq" id="NP_001344622.1">
    <property type="nucleotide sequence ID" value="NM_001357693.2"/>
</dbReference>
<dbReference type="RefSeq" id="NP_001402921.1">
    <property type="nucleotide sequence ID" value="NM_001415992.1"/>
</dbReference>
<dbReference type="RefSeq" id="NP_001402922.1">
    <property type="nucleotide sequence ID" value="NM_001415993.1"/>
</dbReference>
<dbReference type="RefSeq" id="NP_001402923.1">
    <property type="nucleotide sequence ID" value="NM_001415994.1"/>
</dbReference>
<dbReference type="RefSeq" id="NP_001402925.1">
    <property type="nucleotide sequence ID" value="NM_001415996.1"/>
</dbReference>
<dbReference type="RefSeq" id="XP_011243692.1">
    <property type="nucleotide sequence ID" value="XM_011245390.2"/>
</dbReference>
<dbReference type="RefSeq" id="XP_011243693.1">
    <property type="nucleotide sequence ID" value="XM_011245391.2"/>
</dbReference>
<dbReference type="FunCoup" id="P0CW03">
    <property type="interactions" value="16"/>
</dbReference>
<dbReference type="STRING" id="10090.ENSMUSP00000098110"/>
<dbReference type="SwissPalm" id="P0CW03"/>
<dbReference type="jPOST" id="P0CW03"/>
<dbReference type="PaxDb" id="10090-ENSMUSP00000140825"/>
<dbReference type="PeptideAtlas" id="P0CW03"/>
<dbReference type="ProteomicsDB" id="287276"/>
<dbReference type="Pumba" id="P0CW03"/>
<dbReference type="Ensembl" id="ENSMUST00000100542.10">
    <property type="protein sequence ID" value="ENSMUSP00000098110.4"/>
    <property type="gene ID" value="ENSMUSG00000022584.15"/>
</dbReference>
<dbReference type="Ensembl" id="ENSMUST00000188214.7">
    <property type="protein sequence ID" value="ENSMUSP00000140825.2"/>
    <property type="gene ID" value="ENSMUSG00000022584.15"/>
</dbReference>
<dbReference type="Ensembl" id="ENSMUST00000191451.2">
    <property type="protein sequence ID" value="ENSMUSP00000139556.2"/>
    <property type="gene ID" value="ENSMUSG00000022584.15"/>
</dbReference>
<dbReference type="GeneID" id="100041546"/>
<dbReference type="KEGG" id="mmu:100041546"/>
<dbReference type="UCSC" id="uc007wgp.1">
    <property type="organism name" value="mouse"/>
</dbReference>
<dbReference type="AGR" id="MGI:3712069"/>
<dbReference type="CTD" id="100041546"/>
<dbReference type="MGI" id="MGI:3712069">
    <property type="gene designation" value="Ly6c2"/>
</dbReference>
<dbReference type="VEuPathDB" id="HostDB:ENSMUSG00000022584"/>
<dbReference type="eggNOG" id="ENOG502TD4F">
    <property type="taxonomic scope" value="Eukaryota"/>
</dbReference>
<dbReference type="GeneTree" id="ENSGT00940000154560"/>
<dbReference type="HOGENOM" id="CLU_106772_0_0_1"/>
<dbReference type="InParanoid" id="P0CW03"/>
<dbReference type="PhylomeDB" id="P0CW03"/>
<dbReference type="TreeFam" id="TF337757"/>
<dbReference type="BioGRID-ORCS" id="100041546">
    <property type="hits" value="5 hits in 44 CRISPR screens"/>
</dbReference>
<dbReference type="ChiTaRS" id="Ly6c2">
    <property type="organism name" value="mouse"/>
</dbReference>
<dbReference type="PRO" id="PR:P0CW03"/>
<dbReference type="Proteomes" id="UP000000589">
    <property type="component" value="Chromosome 15"/>
</dbReference>
<dbReference type="RNAct" id="P0CW03">
    <property type="molecule type" value="protein"/>
</dbReference>
<dbReference type="Bgee" id="ENSMUSG00000022584">
    <property type="expression patterns" value="Expressed in granulocyte and 55 other cell types or tissues"/>
</dbReference>
<dbReference type="GO" id="GO:0009986">
    <property type="term" value="C:cell surface"/>
    <property type="evidence" value="ECO:0000314"/>
    <property type="project" value="MGI"/>
</dbReference>
<dbReference type="GO" id="GO:0005886">
    <property type="term" value="C:plasma membrane"/>
    <property type="evidence" value="ECO:0007669"/>
    <property type="project" value="UniProtKB-SubCell"/>
</dbReference>
<dbReference type="GO" id="GO:0098552">
    <property type="term" value="C:side of membrane"/>
    <property type="evidence" value="ECO:0007669"/>
    <property type="project" value="UniProtKB-KW"/>
</dbReference>
<dbReference type="CDD" id="cd23541">
    <property type="entry name" value="TFP_LU_ECD_Ly6A_like"/>
    <property type="match status" value="1"/>
</dbReference>
<dbReference type="FunFam" id="2.10.60.10:FF:000003">
    <property type="entry name" value="lymphocyte antigen 6E isoform X1"/>
    <property type="match status" value="1"/>
</dbReference>
<dbReference type="Gene3D" id="2.10.60.10">
    <property type="entry name" value="CD59"/>
    <property type="match status" value="1"/>
</dbReference>
<dbReference type="InterPro" id="IPR018363">
    <property type="entry name" value="CD59_antigen_CS"/>
</dbReference>
<dbReference type="InterPro" id="IPR016054">
    <property type="entry name" value="LY6_UPA_recep-like"/>
</dbReference>
<dbReference type="InterPro" id="IPR051445">
    <property type="entry name" value="LY6H/LY6L_nAChR_modulators"/>
</dbReference>
<dbReference type="InterPro" id="IPR045860">
    <property type="entry name" value="Snake_toxin-like_sf"/>
</dbReference>
<dbReference type="PANTHER" id="PTHR32217">
    <property type="entry name" value="LYMPHOCYTE ANTIGEN 6H"/>
    <property type="match status" value="1"/>
</dbReference>
<dbReference type="PANTHER" id="PTHR32217:SF3">
    <property type="entry name" value="LYMPHOCYTE ANTIGEN 6S"/>
    <property type="match status" value="1"/>
</dbReference>
<dbReference type="Pfam" id="PF00021">
    <property type="entry name" value="UPAR_LY6"/>
    <property type="match status" value="1"/>
</dbReference>
<dbReference type="SMART" id="SM00134">
    <property type="entry name" value="LU"/>
    <property type="match status" value="1"/>
</dbReference>
<dbReference type="SUPFAM" id="SSF57302">
    <property type="entry name" value="Snake toxin-like"/>
    <property type="match status" value="1"/>
</dbReference>
<dbReference type="PROSITE" id="PS00983">
    <property type="entry name" value="LY6_UPAR"/>
    <property type="match status" value="1"/>
</dbReference>
<keyword id="KW-1003">Cell membrane</keyword>
<keyword id="KW-0903">Direct protein sequencing</keyword>
<keyword id="KW-1015">Disulfide bond</keyword>
<keyword id="KW-0325">Glycoprotein</keyword>
<keyword id="KW-0336">GPI-anchor</keyword>
<keyword id="KW-0449">Lipoprotein</keyword>
<keyword id="KW-0472">Membrane</keyword>
<keyword id="KW-1185">Reference proteome</keyword>
<keyword id="KW-0732">Signal</keyword>
<organism>
    <name type="scientific">Mus musculus</name>
    <name type="common">Mouse</name>
    <dbReference type="NCBI Taxonomy" id="10090"/>
    <lineage>
        <taxon>Eukaryota</taxon>
        <taxon>Metazoa</taxon>
        <taxon>Chordata</taxon>
        <taxon>Craniata</taxon>
        <taxon>Vertebrata</taxon>
        <taxon>Euteleostomi</taxon>
        <taxon>Mammalia</taxon>
        <taxon>Eutheria</taxon>
        <taxon>Euarchontoglires</taxon>
        <taxon>Glires</taxon>
        <taxon>Rodentia</taxon>
        <taxon>Myomorpha</taxon>
        <taxon>Muroidea</taxon>
        <taxon>Muridae</taxon>
        <taxon>Murinae</taxon>
        <taxon>Mus</taxon>
        <taxon>Mus</taxon>
    </lineage>
</organism>
<feature type="signal peptide">
    <location>
        <begin position="1"/>
        <end position="26"/>
    </location>
</feature>
<feature type="chain" id="PRO_0000036132" description="Lymphocyte antigen 6C2">
    <location>
        <begin position="27"/>
        <end position="109"/>
    </location>
</feature>
<feature type="propeptide" id="PRO_0000036133" description="Removed in mature form" evidence="2">
    <location>
        <begin position="110"/>
        <end position="131"/>
    </location>
</feature>
<feature type="domain" description="UPAR/Ly6">
    <location>
        <begin position="27"/>
        <end position="116"/>
    </location>
</feature>
<feature type="lipid moiety-binding region" description="GPI-anchor amidated glycine" evidence="2">
    <location>
        <position position="109"/>
    </location>
</feature>
<feature type="disulfide bond" evidence="1">
    <location>
        <begin position="29"/>
        <end position="53"/>
    </location>
</feature>
<feature type="disulfide bond" evidence="1">
    <location>
        <begin position="32"/>
        <end position="41"/>
    </location>
</feature>
<feature type="disulfide bond" evidence="1">
    <location>
        <begin position="46"/>
        <end position="74"/>
    </location>
</feature>
<feature type="disulfide bond" evidence="1">
    <location>
        <begin position="78"/>
        <end position="95"/>
    </location>
</feature>
<feature type="disulfide bond" evidence="1">
    <location>
        <begin position="96"/>
        <end position="101"/>
    </location>
</feature>
<comment type="subcellular location">
    <subcellularLocation>
        <location evidence="3">Cell membrane</location>
        <topology evidence="3">Lipid-anchor</topology>
        <topology evidence="3">GPI-anchor</topology>
    </subcellularLocation>
</comment>
<name>LY6C2_MOUSE</name>
<sequence>MDSTHATKSCLLILLVALLCAGRAQGLQCYECYGVPIETSCPAVTCRASDGFCIAQNIELIEDSQRRKLKTRQCLSFCPAGVPIKDPNIRERTSCCSEDLCNAAVPTAGSTWTMAGVLLFSLSSVILQTLL</sequence>
<evidence type="ECO:0000250" key="1"/>
<evidence type="ECO:0000255" key="2"/>
<evidence type="ECO:0000305" key="3"/>
<reference key="1">
    <citation type="journal article" date="1988" name="J. Immunol.">
        <title>N-terminal and cDNA characterization of murine lymphocyte antigen Ly-6C.2.</title>
        <authorList>
            <person name="Palfree R.G.E."/>
            <person name="Sirlin S."/>
            <person name="Dumont F.J."/>
            <person name="Haemmerling U."/>
        </authorList>
    </citation>
    <scope>NUCLEOTIDE SEQUENCE [MRNA]</scope>
    <scope>PARTIAL PROTEIN SEQUENCE</scope>
</reference>
<reference key="2">
    <citation type="journal article" date="2004" name="Genome Res.">
        <title>The status, quality, and expansion of the NIH full-length cDNA project: the Mammalian Gene Collection (MGC).</title>
        <authorList>
            <consortium name="The MGC Project Team"/>
        </authorList>
    </citation>
    <scope>NUCLEOTIDE SEQUENCE [LARGE SCALE MRNA]</scope>
    <source>
        <strain>FVB/N</strain>
        <tissue>Colon</tissue>
    </source>
</reference>
<protein>
    <recommendedName>
        <fullName>Lymphocyte antigen 6C2</fullName>
        <shortName>Ly-6C2</shortName>
    </recommendedName>
</protein>